<evidence type="ECO:0000250" key="1">
    <source>
        <dbReference type="UniProtKB" id="A9JTM7"/>
    </source>
</evidence>
<evidence type="ECO:0000256" key="2">
    <source>
        <dbReference type="SAM" id="MobiDB-lite"/>
    </source>
</evidence>
<evidence type="ECO:0000269" key="3">
    <source>
    </source>
</evidence>
<evidence type="ECO:0000269" key="4">
    <source>
    </source>
</evidence>
<evidence type="ECO:0000269" key="5">
    <source>
    </source>
</evidence>
<evidence type="ECO:0000303" key="6">
    <source>
    </source>
</evidence>
<evidence type="ECO:0000305" key="7"/>
<evidence type="ECO:0000312" key="8">
    <source>
        <dbReference type="MGI" id="MGI:1916852"/>
    </source>
</evidence>
<accession>Q80UF9</accession>
<accession>A2A6S7</accession>
<accession>B9EKA4</accession>
<accession>Q7M736</accession>
<accession>Q810B4</accession>
<comment type="function">
    <text evidence="3 4 5">Proton-selective channel gated by extracellular protons.</text>
</comment>
<comment type="catalytic activity">
    <reaction evidence="3 4 5">
        <text>H(+)(in) = H(+)(out)</text>
        <dbReference type="Rhea" id="RHEA:34979"/>
        <dbReference type="ChEBI" id="CHEBI:15378"/>
    </reaction>
</comment>
<comment type="activity regulation">
    <text evidence="4 5">Activated by extracellular acidification (PubMed:37023615). Activated by Zn(2+) under non-acidic conditions (PubMed:37023615, PubMed:37053086).</text>
</comment>
<comment type="subunit">
    <text evidence="1">Homodimer.</text>
</comment>
<comment type="subcellular location">
    <subcellularLocation>
        <location evidence="4">Cell membrane</location>
        <topology evidence="1">Multi-pass membrane protein</topology>
    </subcellularLocation>
</comment>
<comment type="alternative products">
    <event type="alternative splicing"/>
    <isoform>
        <id>Q80UF9-1</id>
        <name>1</name>
        <sequence type="displayed"/>
    </isoform>
    <isoform>
        <id>Q80UF9-2</id>
        <name>2</name>
        <sequence type="described" ref="VSP_030162"/>
    </isoform>
</comment>
<comment type="tissue specificity">
    <text evidence="3">Expressed in epidermis, small intestine, stomach and retina.</text>
</comment>
<comment type="similarity">
    <text evidence="7">Belongs to the otopetrin family.</text>
</comment>
<proteinExistence type="evidence at protein level"/>
<keyword id="KW-0025">Alternative splicing</keyword>
<keyword id="KW-1003">Cell membrane</keyword>
<keyword id="KW-0375">Hydrogen ion transport</keyword>
<keyword id="KW-0407">Ion channel</keyword>
<keyword id="KW-0406">Ion transport</keyword>
<keyword id="KW-0472">Membrane</keyword>
<keyword id="KW-1185">Reference proteome</keyword>
<keyword id="KW-0812">Transmembrane</keyword>
<keyword id="KW-1133">Transmembrane helix</keyword>
<keyword id="KW-0813">Transport</keyword>
<reference key="1">
    <citation type="submission" date="2003-04" db="EMBL/GenBank/DDBJ databases">
        <title>Mutations in a new protein containing ankyrin repeats and SAM domain cause deafness in Jackson shaker mice, a model for Usher syndrome type IG.</title>
        <authorList>
            <person name="Kikkawa Y."/>
            <person name="Shitara H."/>
            <person name="Kohara Y."/>
            <person name="Takada T."/>
            <person name="Okamoto M."/>
            <person name="Taya C."/>
            <person name="Wakana S."/>
            <person name="Kamiya K."/>
            <person name="Yoshikawa Y."/>
            <person name="Tokano H."/>
            <person name="Kitamura K."/>
            <person name="Shimizu K."/>
            <person name="Shiroishi T."/>
            <person name="Wakabayashi Y."/>
            <person name="Kominami R."/>
            <person name="Yonekawa H."/>
        </authorList>
    </citation>
    <scope>NUCLEOTIDE SEQUENCE [GENOMIC DNA / MRNA] (ISOFORM 1)</scope>
    <source>
        <strain>C57BL/6J</strain>
        <tissue>Brain</tissue>
    </source>
</reference>
<reference key="2">
    <citation type="journal article" date="2009" name="PLoS Biol.">
        <title>Lineage-specific biology revealed by a finished genome assembly of the mouse.</title>
        <authorList>
            <person name="Church D.M."/>
            <person name="Goodstadt L."/>
            <person name="Hillier L.W."/>
            <person name="Zody M.C."/>
            <person name="Goldstein S."/>
            <person name="She X."/>
            <person name="Bult C.J."/>
            <person name="Agarwala R."/>
            <person name="Cherry J.L."/>
            <person name="DiCuccio M."/>
            <person name="Hlavina W."/>
            <person name="Kapustin Y."/>
            <person name="Meric P."/>
            <person name="Maglott D."/>
            <person name="Birtle Z."/>
            <person name="Marques A.C."/>
            <person name="Graves T."/>
            <person name="Zhou S."/>
            <person name="Teague B."/>
            <person name="Potamousis K."/>
            <person name="Churas C."/>
            <person name="Place M."/>
            <person name="Herschleb J."/>
            <person name="Runnheim R."/>
            <person name="Forrest D."/>
            <person name="Amos-Landgraf J."/>
            <person name="Schwartz D.C."/>
            <person name="Cheng Z."/>
            <person name="Lindblad-Toh K."/>
            <person name="Eichler E.E."/>
            <person name="Ponting C.P."/>
        </authorList>
    </citation>
    <scope>NUCLEOTIDE SEQUENCE [LARGE SCALE GENOMIC DNA]</scope>
    <source>
        <strain>C57BL/6J</strain>
    </source>
</reference>
<reference key="3">
    <citation type="journal article" date="2004" name="Genome Res.">
        <title>The status, quality, and expansion of the NIH full-length cDNA project: the Mammalian Gene Collection (MGC).</title>
        <authorList>
            <consortium name="The MGC Project Team"/>
        </authorList>
    </citation>
    <scope>NUCLEOTIDE SEQUENCE [LARGE SCALE MRNA] (ISOFORM 1)</scope>
    <source>
        <tissue>Brain</tissue>
    </source>
</reference>
<reference key="4">
    <citation type="journal article" date="2003" name="Hum. Mol. Genet.">
        <title>Non-syndromic vestibular disorder with otoconial agenesis in tilted/mergulhador mice caused by mutations in otopetrin 1.</title>
        <authorList>
            <person name="Hurle B."/>
            <person name="Ignatova E."/>
            <person name="Massironi S.M."/>
            <person name="Mashimo T."/>
            <person name="Rios X."/>
            <person name="Thalmann I."/>
            <person name="Thalmann R."/>
            <person name="Ornitz D.M."/>
        </authorList>
    </citation>
    <scope>IDENTIFICATION (ISOFORM 2)</scope>
</reference>
<reference key="5">
    <citation type="journal article" date="2018" name="Science">
        <title>An evolutionarily conserved gene family encodes proton-selective ion channels.</title>
        <authorList>
            <person name="Tu Y.H."/>
            <person name="Cooper A.J."/>
            <person name="Teng B."/>
            <person name="Chang R.B."/>
            <person name="Artiga D.J."/>
            <person name="Turner H.N."/>
            <person name="Mulhall E.M."/>
            <person name="Ye W."/>
            <person name="Smith A.D."/>
            <person name="Liman E.R."/>
        </authorList>
    </citation>
    <scope>FUNCTION</scope>
    <scope>TRANSPORTER ACTIVITY</scope>
    <scope>TISSUE SPECIFICITY</scope>
</reference>
<reference key="6">
    <citation type="journal article" date="2023" name="Biochem. Biophys. Res. Commun.">
        <title>Activation of mouse Otop3 proton channels by Zn2.</title>
        <authorList>
            <person name="Fujii T."/>
            <person name="Shimizu T."/>
            <person name="Kaji Y."/>
            <person name="Katoh M."/>
            <person name="Sakai H."/>
        </authorList>
    </citation>
    <scope>FUNCTION</scope>
    <scope>TRANSPORTER ACTIVITY</scope>
    <scope>ACTIVITY REGULATION</scope>
    <scope>SUBCELLULAR LOCATION</scope>
</reference>
<reference key="7">
    <citation type="journal article" date="2023" name="Elife">
        <title>Zinc activation of OTOP proton channels identifies structural elements of the gating apparatus.</title>
        <authorList>
            <person name="Teng B."/>
            <person name="Kaplan J.P."/>
            <person name="Liang Z."/>
            <person name="Chyung K.S."/>
            <person name="Goldschen-Ohm M.P."/>
            <person name="Liman E.R."/>
        </authorList>
    </citation>
    <scope>FUNCTION</scope>
    <scope>TRANSPORTER ACTIVITY</scope>
    <scope>ACTIVITY REGULATION</scope>
    <scope>MUTAGENESIS OF HIS-234; GLU-238; HIS-531 AND GLU-535</scope>
</reference>
<protein>
    <recommendedName>
        <fullName evidence="7">Proton channel OTOP3</fullName>
    </recommendedName>
    <alternativeName>
        <fullName evidence="6">Otopetrin-3</fullName>
    </alternativeName>
</protein>
<organism>
    <name type="scientific">Mus musculus</name>
    <name type="common">Mouse</name>
    <dbReference type="NCBI Taxonomy" id="10090"/>
    <lineage>
        <taxon>Eukaryota</taxon>
        <taxon>Metazoa</taxon>
        <taxon>Chordata</taxon>
        <taxon>Craniata</taxon>
        <taxon>Vertebrata</taxon>
        <taxon>Euteleostomi</taxon>
        <taxon>Mammalia</taxon>
        <taxon>Eutheria</taxon>
        <taxon>Euarchontoglires</taxon>
        <taxon>Glires</taxon>
        <taxon>Rodentia</taxon>
        <taxon>Myomorpha</taxon>
        <taxon>Muroidea</taxon>
        <taxon>Muridae</taxon>
        <taxon>Murinae</taxon>
        <taxon>Mus</taxon>
        <taxon>Mus</taxon>
    </lineage>
</organism>
<gene>
    <name evidence="6 8" type="primary">Otop3</name>
</gene>
<feature type="chain" id="PRO_0000313823" description="Proton channel OTOP3">
    <location>
        <begin position="1"/>
        <end position="577"/>
    </location>
</feature>
<feature type="topological domain" description="Cytoplasmic" evidence="1">
    <location>
        <begin position="1"/>
        <end position="69"/>
    </location>
</feature>
<feature type="transmembrane region" description="Helical; Name=1" evidence="1">
    <location>
        <begin position="70"/>
        <end position="90"/>
    </location>
</feature>
<feature type="topological domain" description="Extracellular" evidence="7">
    <location>
        <begin position="91"/>
        <end position="100"/>
    </location>
</feature>
<feature type="transmembrane region" description="Helical; Name=2" evidence="1">
    <location>
        <begin position="101"/>
        <end position="124"/>
    </location>
</feature>
<feature type="topological domain" description="Cytoplasmic" evidence="7">
    <location>
        <begin position="125"/>
        <end position="140"/>
    </location>
</feature>
<feature type="transmembrane region" description="Helical; Name=3" evidence="1">
    <location>
        <begin position="141"/>
        <end position="162"/>
    </location>
</feature>
<feature type="topological domain" description="Extracellular" evidence="7">
    <location>
        <begin position="163"/>
        <end position="174"/>
    </location>
</feature>
<feature type="transmembrane region" description="Helical; Name=4" evidence="1">
    <location>
        <begin position="175"/>
        <end position="198"/>
    </location>
</feature>
<feature type="topological domain" description="Cytoplasmic" evidence="7">
    <location>
        <begin position="199"/>
        <end position="206"/>
    </location>
</feature>
<feature type="transmembrane region" description="Helical; Name=5" evidence="1">
    <location>
        <begin position="207"/>
        <end position="229"/>
    </location>
</feature>
<feature type="topological domain" description="Extracellular" evidence="7">
    <location>
        <begin position="230"/>
        <end position="276"/>
    </location>
</feature>
<feature type="transmembrane region" description="Helical; Name=6" evidence="1">
    <location>
        <begin position="277"/>
        <end position="293"/>
    </location>
</feature>
<feature type="topological domain" description="Cytoplasmic" evidence="7">
    <location>
        <begin position="294"/>
        <end position="319"/>
    </location>
</feature>
<feature type="transmembrane region" description="Helical; Name=7" evidence="1">
    <location>
        <begin position="320"/>
        <end position="339"/>
    </location>
</feature>
<feature type="topological domain" description="Extracellular" evidence="7">
    <location>
        <begin position="340"/>
        <end position="353"/>
    </location>
</feature>
<feature type="transmembrane region" description="Helical; Name=8" evidence="1">
    <location>
        <begin position="354"/>
        <end position="376"/>
    </location>
</feature>
<feature type="topological domain" description="Cytoplasmic" evidence="7">
    <location>
        <begin position="377"/>
        <end position="394"/>
    </location>
</feature>
<feature type="transmembrane region" description="Helical; Name=9" evidence="1">
    <location>
        <begin position="395"/>
        <end position="416"/>
    </location>
</feature>
<feature type="topological domain" description="Extracellular" evidence="7">
    <location>
        <begin position="417"/>
        <end position="427"/>
    </location>
</feature>
<feature type="transmembrane region" description="Helical; Name=10" evidence="1">
    <location>
        <begin position="428"/>
        <end position="450"/>
    </location>
</feature>
<feature type="topological domain" description="Cytoplasmic" evidence="7">
    <location>
        <begin position="451"/>
        <end position="510"/>
    </location>
</feature>
<feature type="transmembrane region" description="Helical; Name=11" evidence="1">
    <location>
        <begin position="511"/>
        <end position="528"/>
    </location>
</feature>
<feature type="topological domain" description="Extracellular" evidence="7">
    <location>
        <begin position="529"/>
        <end position="547"/>
    </location>
</feature>
<feature type="transmembrane region" description="Helical; Name=12" evidence="1">
    <location>
        <begin position="548"/>
        <end position="570"/>
    </location>
</feature>
<feature type="topological domain" description="Cytoplasmic" evidence="1">
    <location>
        <begin position="571"/>
        <end position="577"/>
    </location>
</feature>
<feature type="region of interest" description="Disordered" evidence="2">
    <location>
        <begin position="1"/>
        <end position="46"/>
    </location>
</feature>
<feature type="splice variant" id="VSP_030162" description="In isoform 2." evidence="7">
    <original>KF</original>
    <variation>KLSVLQCRTCLRCCLFLPYLL</variation>
    <location>
        <begin position="247"/>
        <end position="248"/>
    </location>
</feature>
<feature type="mutagenesis site" description="Reduced efficacy of Zn(2+) to potentiate proton channel activity." evidence="5">
    <original>H</original>
    <variation>A</variation>
    <location>
        <position position="234"/>
    </location>
</feature>
<feature type="mutagenesis site" description="Reduced efficacy of Zn(2+) to potentiate proton channel activity." evidence="5">
    <original>E</original>
    <variation>A</variation>
    <location>
        <position position="238"/>
    </location>
</feature>
<feature type="mutagenesis site" description="Eliminated the ability of Zn(2+) to potentiate proton channel activity." evidence="5">
    <original>H</original>
    <variation>R</variation>
    <variation>A</variation>
    <location>
        <position position="531"/>
    </location>
</feature>
<feature type="mutagenesis site" description="Reduced the ability of Zn(2+) to potentiate proton channel activity." evidence="5">
    <original>E</original>
    <variation>A</variation>
    <location>
        <position position="535"/>
    </location>
</feature>
<feature type="sequence conflict" description="In Ref. 1; BAC67685." evidence="7" ref="1">
    <original>D</original>
    <variation>N</variation>
    <location>
        <position position="242"/>
    </location>
</feature>
<feature type="sequence conflict" description="In Ref. 1; BAC57428." evidence="7" ref="1">
    <original>T</original>
    <variation>S</variation>
    <location>
        <position position="279"/>
    </location>
</feature>
<name>OTOP3_MOUSE</name>
<dbReference type="EMBL" id="AB087501">
    <property type="protein sequence ID" value="BAC57428.1"/>
    <property type="molecule type" value="Genomic_DNA"/>
</dbReference>
<dbReference type="EMBL" id="AB087505">
    <property type="protein sequence ID" value="BAC67685.1"/>
    <property type="molecule type" value="mRNA"/>
</dbReference>
<dbReference type="EMBL" id="AL603828">
    <property type="status" value="NOT_ANNOTATED_CDS"/>
    <property type="molecule type" value="Genomic_DNA"/>
</dbReference>
<dbReference type="EMBL" id="BC150803">
    <property type="protein sequence ID" value="AAI50804.1"/>
    <property type="molecule type" value="mRNA"/>
</dbReference>
<dbReference type="EMBL" id="BK000630">
    <property type="protein sequence ID" value="DAA00892.1"/>
    <property type="molecule type" value="mRNA"/>
</dbReference>
<dbReference type="CCDS" id="CCDS25629.1">
    <molecule id="Q80UF9-2"/>
</dbReference>
<dbReference type="CCDS" id="CCDS83926.1">
    <molecule id="Q80UF9-1"/>
</dbReference>
<dbReference type="RefSeq" id="NP_001334576.1">
    <molecule id="Q80UF9-1"/>
    <property type="nucleotide sequence ID" value="NM_001347647.1"/>
</dbReference>
<dbReference type="SMR" id="Q80UF9"/>
<dbReference type="FunCoup" id="Q80UF9">
    <property type="interactions" value="252"/>
</dbReference>
<dbReference type="STRING" id="10090.ENSMUSP00000019006"/>
<dbReference type="iPTMnet" id="Q80UF9"/>
<dbReference type="PhosphoSitePlus" id="Q80UF9"/>
<dbReference type="PaxDb" id="10090-ENSMUSP00000019006"/>
<dbReference type="ProteomicsDB" id="294400">
    <molecule id="Q80UF9-1"/>
</dbReference>
<dbReference type="ProteomicsDB" id="294401">
    <molecule id="Q80UF9-2"/>
</dbReference>
<dbReference type="Antibodypedia" id="19484">
    <property type="antibodies" value="78 antibodies from 19 providers"/>
</dbReference>
<dbReference type="DNASU" id="69602"/>
<dbReference type="Ensembl" id="ENSMUST00000106543.8">
    <molecule id="Q80UF9-1"/>
    <property type="protein sequence ID" value="ENSMUSP00000102153.2"/>
    <property type="gene ID" value="ENSMUSG00000018862.12"/>
</dbReference>
<dbReference type="GeneID" id="69602"/>
<dbReference type="KEGG" id="mmu:69602"/>
<dbReference type="UCSC" id="uc007mhf.1">
    <molecule id="Q80UF9-1"/>
    <property type="organism name" value="mouse"/>
</dbReference>
<dbReference type="AGR" id="MGI:1916852"/>
<dbReference type="CTD" id="347741"/>
<dbReference type="MGI" id="MGI:1916852">
    <property type="gene designation" value="Otop3"/>
</dbReference>
<dbReference type="VEuPathDB" id="HostDB:ENSMUSG00000018862"/>
<dbReference type="eggNOG" id="KOG4740">
    <property type="taxonomic scope" value="Eukaryota"/>
</dbReference>
<dbReference type="GeneTree" id="ENSGT00940000160638"/>
<dbReference type="HOGENOM" id="CLU_032913_0_0_1"/>
<dbReference type="InParanoid" id="Q80UF9"/>
<dbReference type="OrthoDB" id="6429739at2759"/>
<dbReference type="PhylomeDB" id="Q80UF9"/>
<dbReference type="BioGRID-ORCS" id="69602">
    <property type="hits" value="2 hits in 77 CRISPR screens"/>
</dbReference>
<dbReference type="PRO" id="PR:Q80UF9"/>
<dbReference type="Proteomes" id="UP000000589">
    <property type="component" value="Chromosome 11"/>
</dbReference>
<dbReference type="RNAct" id="Q80UF9">
    <property type="molecule type" value="protein"/>
</dbReference>
<dbReference type="Bgee" id="ENSMUSG00000018862">
    <property type="expression patterns" value="Expressed in duodenum and 27 other cell types or tissues"/>
</dbReference>
<dbReference type="ExpressionAtlas" id="Q80UF9">
    <property type="expression patterns" value="baseline and differential"/>
</dbReference>
<dbReference type="GO" id="GO:0016020">
    <property type="term" value="C:membrane"/>
    <property type="evidence" value="ECO:0000250"/>
    <property type="project" value="MGI"/>
</dbReference>
<dbReference type="GO" id="GO:0005886">
    <property type="term" value="C:plasma membrane"/>
    <property type="evidence" value="ECO:0000314"/>
    <property type="project" value="UniProtKB"/>
</dbReference>
<dbReference type="GO" id="GO:0042802">
    <property type="term" value="F:identical protein binding"/>
    <property type="evidence" value="ECO:0000250"/>
    <property type="project" value="UniProtKB"/>
</dbReference>
<dbReference type="GO" id="GO:0015252">
    <property type="term" value="F:proton channel activity"/>
    <property type="evidence" value="ECO:0000314"/>
    <property type="project" value="UniProtKB"/>
</dbReference>
<dbReference type="GO" id="GO:1902600">
    <property type="term" value="P:proton transmembrane transport"/>
    <property type="evidence" value="ECO:0000314"/>
    <property type="project" value="UniProtKB"/>
</dbReference>
<dbReference type="InterPro" id="IPR004878">
    <property type="entry name" value="Otopetrin"/>
</dbReference>
<dbReference type="PANTHER" id="PTHR21522">
    <property type="entry name" value="PROTON CHANNEL OTOP"/>
    <property type="match status" value="1"/>
</dbReference>
<dbReference type="PANTHER" id="PTHR21522:SF36">
    <property type="entry name" value="PROTON CHANNEL OTOP3"/>
    <property type="match status" value="1"/>
</dbReference>
<dbReference type="Pfam" id="PF03189">
    <property type="entry name" value="Otopetrin"/>
    <property type="match status" value="2"/>
</dbReference>
<sequence length="577" mass="64743">MASQTSAPAEPAPMPSPEAKTTEGASSYDQADMETKHAGSPCPPKQKSWLARHFSLLLRRDRQAQKAGQLFSGLLALNVVFLGGAFICSMIFNKVSVTLGDVWILLAALKVLSLLWLLYYTVGTTRKPHAVLYRDPHAGPIWVRGSLVLFGSCTVCLNIFRMGYDVSHIHCKSEVELIFPAIEIVFMIIQTWVLWRHCKDCVQVQTNFTRCGLMLTLATNLLMWVLAVTNDSMHREIEAELDALMEKFSGNGTNTCMCLNTTVCEVFRKGYLMLYPFSTEYCLICCAVLFVMWKNVSRSLAAHTGAHPNRSPFRLHGTIFGPLLGLLALVAGVCVFVLFQIEASGPDIARQYFTLYYAFYVAVLPTMSLACLAGTAIHGLEERELDTLKNPTRSLDVVLLMGAALGQMGIAYFSIVAIVATQPHELLNQLILAYSLLLILQHITQNLFIIEGLHRRPLWEPAVSGVMEKQDVELPRRGSLRELGQDLRRASRAYIHSFSHLNWKRRMLKEISLFLILCNITLWMMPAFGIHPEFENGLEKDFYGYRTWFTIVNFGLPLGVFYRMHSVGGLVEVYLGA</sequence>